<proteinExistence type="inferred from homology"/>
<evidence type="ECO:0000255" key="1">
    <source>
        <dbReference type="HAMAP-Rule" id="MF_01225"/>
    </source>
</evidence>
<evidence type="ECO:0000255" key="2">
    <source>
        <dbReference type="PROSITE-ProRule" id="PRU01266"/>
    </source>
</evidence>
<reference key="1">
    <citation type="journal article" date="2000" name="Nature">
        <title>Complete genome sequence of Pseudomonas aeruginosa PAO1, an opportunistic pathogen.</title>
        <authorList>
            <person name="Stover C.K."/>
            <person name="Pham X.-Q.T."/>
            <person name="Erwin A.L."/>
            <person name="Mizoguchi S.D."/>
            <person name="Warrener P."/>
            <person name="Hickey M.J."/>
            <person name="Brinkman F.S.L."/>
            <person name="Hufnagle W.O."/>
            <person name="Kowalik D.J."/>
            <person name="Lagrou M."/>
            <person name="Garber R.L."/>
            <person name="Goltry L."/>
            <person name="Tolentino E."/>
            <person name="Westbrock-Wadman S."/>
            <person name="Yuan Y."/>
            <person name="Brody L.L."/>
            <person name="Coulter S.N."/>
            <person name="Folger K.R."/>
            <person name="Kas A."/>
            <person name="Larbig K."/>
            <person name="Lim R.M."/>
            <person name="Smith K.A."/>
            <person name="Spencer D.H."/>
            <person name="Wong G.K.-S."/>
            <person name="Wu Z."/>
            <person name="Paulsen I.T."/>
            <person name="Reizer J."/>
            <person name="Saier M.H. Jr."/>
            <person name="Hancock R.E.W."/>
            <person name="Lory S."/>
            <person name="Olson M.V."/>
        </authorList>
    </citation>
    <scope>NUCLEOTIDE SEQUENCE [LARGE SCALE GENOMIC DNA]</scope>
    <source>
        <strain>ATCC 15692 / DSM 22644 / CIP 104116 / JCM 14847 / LMG 12228 / 1C / PRS 101 / PAO1</strain>
    </source>
</reference>
<reference key="2">
    <citation type="submission" date="1997-10" db="EMBL/GenBank/DDBJ databases">
        <title>Regulation of Pseudomonas aeruginosa nitrate respiration by NarX/L and the Anr/Dnr-system.</title>
        <authorList>
            <person name="Rompf A."/>
            <person name="Hyland S."/>
            <person name="Hoffmann T."/>
            <person name="Jahn D."/>
        </authorList>
    </citation>
    <scope>NUCLEOTIDE SEQUENCE [GENOMIC DNA] OF 1-184</scope>
    <source>
        <strain>ATCC 15692 / DSM 22644 / CIP 104116 / JCM 14847 / LMG 12228 / 1C / PRS 101 / PAO1</strain>
    </source>
</reference>
<feature type="chain" id="PRO_0000152980" description="GTP 3',8-cyclase 1">
    <location>
        <begin position="1"/>
        <end position="329"/>
    </location>
</feature>
<feature type="domain" description="Radical SAM core" evidence="2">
    <location>
        <begin position="7"/>
        <end position="230"/>
    </location>
</feature>
<feature type="binding site" evidence="1">
    <location>
        <position position="16"/>
    </location>
    <ligand>
        <name>GTP</name>
        <dbReference type="ChEBI" id="CHEBI:37565"/>
    </ligand>
</feature>
<feature type="binding site" evidence="1">
    <location>
        <position position="23"/>
    </location>
    <ligand>
        <name>[4Fe-4S] cluster</name>
        <dbReference type="ChEBI" id="CHEBI:49883"/>
        <label>1</label>
        <note>4Fe-4S-S-AdoMet</note>
    </ligand>
</feature>
<feature type="binding site" evidence="1">
    <location>
        <position position="27"/>
    </location>
    <ligand>
        <name>[4Fe-4S] cluster</name>
        <dbReference type="ChEBI" id="CHEBI:49883"/>
        <label>1</label>
        <note>4Fe-4S-S-AdoMet</note>
    </ligand>
</feature>
<feature type="binding site" evidence="1">
    <location>
        <position position="29"/>
    </location>
    <ligand>
        <name>S-adenosyl-L-methionine</name>
        <dbReference type="ChEBI" id="CHEBI:59789"/>
    </ligand>
</feature>
<feature type="binding site" evidence="1">
    <location>
        <position position="30"/>
    </location>
    <ligand>
        <name>[4Fe-4S] cluster</name>
        <dbReference type="ChEBI" id="CHEBI:49883"/>
        <label>1</label>
        <note>4Fe-4S-S-AdoMet</note>
    </ligand>
</feature>
<feature type="binding site" evidence="1">
    <location>
        <position position="65"/>
    </location>
    <ligand>
        <name>GTP</name>
        <dbReference type="ChEBI" id="CHEBI:37565"/>
    </ligand>
</feature>
<feature type="binding site" evidence="1">
    <location>
        <position position="69"/>
    </location>
    <ligand>
        <name>S-adenosyl-L-methionine</name>
        <dbReference type="ChEBI" id="CHEBI:59789"/>
    </ligand>
</feature>
<feature type="binding site" evidence="1">
    <location>
        <position position="96"/>
    </location>
    <ligand>
        <name>GTP</name>
        <dbReference type="ChEBI" id="CHEBI:37565"/>
    </ligand>
</feature>
<feature type="binding site" evidence="1">
    <location>
        <position position="120"/>
    </location>
    <ligand>
        <name>S-adenosyl-L-methionine</name>
        <dbReference type="ChEBI" id="CHEBI:59789"/>
    </ligand>
</feature>
<feature type="binding site" evidence="1">
    <location>
        <position position="157"/>
    </location>
    <ligand>
        <name>GTP</name>
        <dbReference type="ChEBI" id="CHEBI:37565"/>
    </ligand>
</feature>
<feature type="binding site" evidence="1">
    <location>
        <position position="191"/>
    </location>
    <ligand>
        <name>S-adenosyl-L-methionine</name>
        <dbReference type="ChEBI" id="CHEBI:59789"/>
    </ligand>
</feature>
<feature type="binding site" evidence="1">
    <location>
        <position position="255"/>
    </location>
    <ligand>
        <name>[4Fe-4S] cluster</name>
        <dbReference type="ChEBI" id="CHEBI:49883"/>
        <label>2</label>
        <note>4Fe-4S-substrate</note>
    </ligand>
</feature>
<feature type="binding site" evidence="1">
    <location>
        <position position="258"/>
    </location>
    <ligand>
        <name>[4Fe-4S] cluster</name>
        <dbReference type="ChEBI" id="CHEBI:49883"/>
        <label>2</label>
        <note>4Fe-4S-substrate</note>
    </ligand>
</feature>
<feature type="binding site" evidence="1">
    <location>
        <begin position="260"/>
        <end position="262"/>
    </location>
    <ligand>
        <name>GTP</name>
        <dbReference type="ChEBI" id="CHEBI:37565"/>
    </ligand>
</feature>
<feature type="binding site" evidence="1">
    <location>
        <position position="272"/>
    </location>
    <ligand>
        <name>[4Fe-4S] cluster</name>
        <dbReference type="ChEBI" id="CHEBI:49883"/>
        <label>2</label>
        <note>4Fe-4S-substrate</note>
    </ligand>
</feature>
<dbReference type="EC" id="4.1.99.22" evidence="1"/>
<dbReference type="EMBL" id="AE004091">
    <property type="protein sequence ID" value="AAG07257.1"/>
    <property type="molecule type" value="Genomic_DNA"/>
</dbReference>
<dbReference type="EMBL" id="Y15252">
    <property type="protein sequence ID" value="CAA75545.1"/>
    <property type="molecule type" value="Genomic_DNA"/>
</dbReference>
<dbReference type="PIR" id="B83162">
    <property type="entry name" value="B83162"/>
</dbReference>
<dbReference type="RefSeq" id="NP_252559.1">
    <property type="nucleotide sequence ID" value="NC_002516.2"/>
</dbReference>
<dbReference type="RefSeq" id="WP_003092949.1">
    <property type="nucleotide sequence ID" value="NZ_QZGE01000001.1"/>
</dbReference>
<dbReference type="SMR" id="Q9HXD6"/>
<dbReference type="FunCoup" id="Q9HXD6">
    <property type="interactions" value="564"/>
</dbReference>
<dbReference type="STRING" id="208964.PA3870"/>
<dbReference type="PaxDb" id="208964-PA3870"/>
<dbReference type="DNASU" id="879786"/>
<dbReference type="GeneID" id="879786"/>
<dbReference type="KEGG" id="pae:PA3870"/>
<dbReference type="PATRIC" id="fig|208964.12.peg.4053"/>
<dbReference type="PseudoCAP" id="PA3870"/>
<dbReference type="HOGENOM" id="CLU_009273_0_1_6"/>
<dbReference type="InParanoid" id="Q9HXD6"/>
<dbReference type="OrthoDB" id="9763993at2"/>
<dbReference type="PhylomeDB" id="Q9HXD6"/>
<dbReference type="BioCyc" id="PAER208964:G1FZ6-3942-MONOMER"/>
<dbReference type="UniPathway" id="UPA00344"/>
<dbReference type="Proteomes" id="UP000002438">
    <property type="component" value="Chromosome"/>
</dbReference>
<dbReference type="GO" id="GO:0051539">
    <property type="term" value="F:4 iron, 4 sulfur cluster binding"/>
    <property type="evidence" value="ECO:0007669"/>
    <property type="project" value="UniProtKB-UniRule"/>
</dbReference>
<dbReference type="GO" id="GO:0061799">
    <property type="term" value="F:cyclic pyranopterin monophosphate synthase activity"/>
    <property type="evidence" value="ECO:0000318"/>
    <property type="project" value="GO_Central"/>
</dbReference>
<dbReference type="GO" id="GO:0061798">
    <property type="term" value="F:GTP 3',8'-cyclase activity"/>
    <property type="evidence" value="ECO:0000318"/>
    <property type="project" value="GO_Central"/>
</dbReference>
<dbReference type="GO" id="GO:0005525">
    <property type="term" value="F:GTP binding"/>
    <property type="evidence" value="ECO:0007669"/>
    <property type="project" value="UniProtKB-UniRule"/>
</dbReference>
<dbReference type="GO" id="GO:0046872">
    <property type="term" value="F:metal ion binding"/>
    <property type="evidence" value="ECO:0007669"/>
    <property type="project" value="UniProtKB-KW"/>
</dbReference>
<dbReference type="GO" id="GO:1904047">
    <property type="term" value="F:S-adenosyl-L-methionine binding"/>
    <property type="evidence" value="ECO:0007669"/>
    <property type="project" value="UniProtKB-UniRule"/>
</dbReference>
<dbReference type="GO" id="GO:0006777">
    <property type="term" value="P:Mo-molybdopterin cofactor biosynthetic process"/>
    <property type="evidence" value="ECO:0000318"/>
    <property type="project" value="GO_Central"/>
</dbReference>
<dbReference type="CDD" id="cd01335">
    <property type="entry name" value="Radical_SAM"/>
    <property type="match status" value="1"/>
</dbReference>
<dbReference type="CDD" id="cd21117">
    <property type="entry name" value="Twitch_MoaA"/>
    <property type="match status" value="1"/>
</dbReference>
<dbReference type="Gene3D" id="3.20.20.70">
    <property type="entry name" value="Aldolase class I"/>
    <property type="match status" value="1"/>
</dbReference>
<dbReference type="HAMAP" id="MF_01225_B">
    <property type="entry name" value="MoaA_B"/>
    <property type="match status" value="1"/>
</dbReference>
<dbReference type="InterPro" id="IPR013785">
    <property type="entry name" value="Aldolase_TIM"/>
</dbReference>
<dbReference type="InterPro" id="IPR006638">
    <property type="entry name" value="Elp3/MiaA/NifB-like_rSAM"/>
</dbReference>
<dbReference type="InterPro" id="IPR013483">
    <property type="entry name" value="MoaA"/>
</dbReference>
<dbReference type="InterPro" id="IPR000385">
    <property type="entry name" value="MoaA_NifB_PqqE_Fe-S-bd_CS"/>
</dbReference>
<dbReference type="InterPro" id="IPR010505">
    <property type="entry name" value="MoaA_twitch"/>
</dbReference>
<dbReference type="InterPro" id="IPR050105">
    <property type="entry name" value="MoCo_biosynth_MoaA/MoaC"/>
</dbReference>
<dbReference type="InterPro" id="IPR007197">
    <property type="entry name" value="rSAM"/>
</dbReference>
<dbReference type="NCBIfam" id="TIGR02666">
    <property type="entry name" value="moaA"/>
    <property type="match status" value="1"/>
</dbReference>
<dbReference type="PANTHER" id="PTHR22960:SF0">
    <property type="entry name" value="MOLYBDENUM COFACTOR BIOSYNTHESIS PROTEIN 1"/>
    <property type="match status" value="1"/>
</dbReference>
<dbReference type="PANTHER" id="PTHR22960">
    <property type="entry name" value="MOLYBDOPTERIN COFACTOR SYNTHESIS PROTEIN A"/>
    <property type="match status" value="1"/>
</dbReference>
<dbReference type="Pfam" id="PF13353">
    <property type="entry name" value="Fer4_12"/>
    <property type="match status" value="1"/>
</dbReference>
<dbReference type="Pfam" id="PF06463">
    <property type="entry name" value="Mob_synth_C"/>
    <property type="match status" value="1"/>
</dbReference>
<dbReference type="Pfam" id="PF04055">
    <property type="entry name" value="Radical_SAM"/>
    <property type="match status" value="1"/>
</dbReference>
<dbReference type="SFLD" id="SFLDG01383">
    <property type="entry name" value="cyclic_pyranopterin_phosphate"/>
    <property type="match status" value="1"/>
</dbReference>
<dbReference type="SFLD" id="SFLDG01386">
    <property type="entry name" value="main_SPASM_domain-containing"/>
    <property type="match status" value="1"/>
</dbReference>
<dbReference type="SMART" id="SM00729">
    <property type="entry name" value="Elp3"/>
    <property type="match status" value="1"/>
</dbReference>
<dbReference type="SUPFAM" id="SSF102114">
    <property type="entry name" value="Radical SAM enzymes"/>
    <property type="match status" value="1"/>
</dbReference>
<dbReference type="PROSITE" id="PS01305">
    <property type="entry name" value="MOAA_NIFB_PQQE"/>
    <property type="match status" value="1"/>
</dbReference>
<dbReference type="PROSITE" id="PS51918">
    <property type="entry name" value="RADICAL_SAM"/>
    <property type="match status" value="1"/>
</dbReference>
<protein>
    <recommendedName>
        <fullName evidence="1">GTP 3',8-cyclase 1</fullName>
        <ecNumber evidence="1">4.1.99.22</ecNumber>
    </recommendedName>
    <alternativeName>
        <fullName evidence="1">Molybdenum cofactor biosynthesis protein A 1</fullName>
    </alternativeName>
</protein>
<organism>
    <name type="scientific">Pseudomonas aeruginosa (strain ATCC 15692 / DSM 22644 / CIP 104116 / JCM 14847 / LMG 12228 / 1C / PRS 101 / PAO1)</name>
    <dbReference type="NCBI Taxonomy" id="208964"/>
    <lineage>
        <taxon>Bacteria</taxon>
        <taxon>Pseudomonadati</taxon>
        <taxon>Pseudomonadota</taxon>
        <taxon>Gammaproteobacteria</taxon>
        <taxon>Pseudomonadales</taxon>
        <taxon>Pseudomonadaceae</taxon>
        <taxon>Pseudomonas</taxon>
    </lineage>
</organism>
<accession>Q9HXD6</accession>
<accession>O54048</accession>
<keyword id="KW-0004">4Fe-4S</keyword>
<keyword id="KW-0342">GTP-binding</keyword>
<keyword id="KW-0408">Iron</keyword>
<keyword id="KW-0411">Iron-sulfur</keyword>
<keyword id="KW-0456">Lyase</keyword>
<keyword id="KW-0479">Metal-binding</keyword>
<keyword id="KW-0501">Molybdenum cofactor biosynthesis</keyword>
<keyword id="KW-0547">Nucleotide-binding</keyword>
<keyword id="KW-1185">Reference proteome</keyword>
<keyword id="KW-0949">S-adenosyl-L-methionine</keyword>
<name>MOAA1_PSEAE</name>
<sequence length="329" mass="36628">MTDWIDGQGRQIDYLRLSVTDRCDFRCVYCMAEDMRFLPRQQVLTLEEIERVARLFVAGGVRKLRLTGGEPLVRPGIVGLCERLAALPGLRELCMTSNGSQLVRYARPLYDAGLSRLNISLDTLDPLRFRAITRNGELDKVLAGIDAAQAAGFRRIKLNAVVMKGRNADEVPALVDFAIARGLDISFIEEMPLGQVGRERGESFCSSDEVRALIAQRHALLDSAEQSGGPARYVRLVEHPQTRIGFISPHSHNFCATCNRLRLTVEGRLLLCLGHEHSLDLRALLRRHPLHDGPLLEAIGEALQRKPARHEFSAAGEVQVLRFMNMSGG</sequence>
<gene>
    <name type="primary">moaA1</name>
    <name type="synonym">moaA</name>
    <name type="ordered locus">PA3870</name>
</gene>
<comment type="function">
    <text evidence="1">Catalyzes the cyclization of GTP to (8S)-3',8-cyclo-7,8-dihydroguanosine 5'-triphosphate.</text>
</comment>
<comment type="catalytic activity">
    <reaction evidence="1">
        <text>GTP + AH2 + S-adenosyl-L-methionine = (8S)-3',8-cyclo-7,8-dihydroguanosine 5'-triphosphate + 5'-deoxyadenosine + L-methionine + A + H(+)</text>
        <dbReference type="Rhea" id="RHEA:49576"/>
        <dbReference type="ChEBI" id="CHEBI:13193"/>
        <dbReference type="ChEBI" id="CHEBI:15378"/>
        <dbReference type="ChEBI" id="CHEBI:17319"/>
        <dbReference type="ChEBI" id="CHEBI:17499"/>
        <dbReference type="ChEBI" id="CHEBI:37565"/>
        <dbReference type="ChEBI" id="CHEBI:57844"/>
        <dbReference type="ChEBI" id="CHEBI:59789"/>
        <dbReference type="ChEBI" id="CHEBI:131766"/>
        <dbReference type="EC" id="4.1.99.22"/>
    </reaction>
</comment>
<comment type="cofactor">
    <cofactor evidence="1">
        <name>[4Fe-4S] cluster</name>
        <dbReference type="ChEBI" id="CHEBI:49883"/>
    </cofactor>
    <text evidence="1">Binds 2 [4Fe-4S] clusters. Binds 1 [4Fe-4S] cluster coordinated with 3 cysteines and an exchangeable S-adenosyl-L-methionine and 1 [4Fe-4S] cluster coordinated with 3 cysteines and the GTP-derived substrate.</text>
</comment>
<comment type="pathway">
    <text evidence="1">Cofactor biosynthesis; molybdopterin biosynthesis.</text>
</comment>
<comment type="subunit">
    <text evidence="1">Monomer and homodimer.</text>
</comment>
<comment type="similarity">
    <text evidence="1">Belongs to the radical SAM superfamily. MoaA family.</text>
</comment>